<name>CAC1C_CHICK</name>
<gene>
    <name type="primary">CACNA1C</name>
</gene>
<protein>
    <recommendedName>
        <fullName>Voltage-dependent L-type calcium channel subunit alpha-1C</fullName>
    </recommendedName>
    <alternativeName>
        <fullName>CHCACHA1C</fullName>
    </alternativeName>
    <alternativeName>
        <fullName>Voltage-gated calcium channel subunit alpha Cav1.2</fullName>
    </alternativeName>
</protein>
<evidence type="ECO:0000250" key="1">
    <source>
        <dbReference type="UniProtKB" id="P07293"/>
    </source>
</evidence>
<evidence type="ECO:0000250" key="2">
    <source>
        <dbReference type="UniProtKB" id="P15381"/>
    </source>
</evidence>
<evidence type="ECO:0000250" key="3">
    <source>
        <dbReference type="UniProtKB" id="P22002"/>
    </source>
</evidence>
<evidence type="ECO:0000250" key="4">
    <source>
        <dbReference type="UniProtKB" id="Q01815"/>
    </source>
</evidence>
<evidence type="ECO:0000250" key="5">
    <source>
        <dbReference type="UniProtKB" id="Q13936"/>
    </source>
</evidence>
<evidence type="ECO:0000255" key="6"/>
<evidence type="ECO:0000305" key="7"/>
<feature type="chain" id="PRO_0000053932" description="Voltage-dependent L-type calcium channel subunit alpha-1C">
    <location>
        <begin position="1" status="less than"/>
        <end position="177" status="greater than"/>
    </location>
</feature>
<feature type="transmembrane region" description="Helical; Name=S4 of repeat IV" evidence="1">
    <location>
        <begin position="27"/>
        <end position="45"/>
    </location>
</feature>
<feature type="transmembrane region" description="Helical; Name=S5 of repeat IV" evidence="1">
    <location>
        <begin position="64"/>
        <end position="84"/>
    </location>
</feature>
<feature type="intramembrane region" description="Pore-forming" evidence="1">
    <location>
        <begin position="107"/>
        <end position="125"/>
    </location>
</feature>
<feature type="transmembrane region" description="Helical; Name=S6 of repeat IV" evidence="1">
    <location>
        <begin position="154"/>
        <end position="177" status="greater than"/>
    </location>
</feature>
<feature type="short sequence motif" description="Selectivity filter of repeat IV" evidence="1">
    <location>
        <begin position="116"/>
        <end position="119"/>
    </location>
</feature>
<feature type="site" description="Calcium ion selectivity and permeability" evidence="2">
    <location>
        <position position="118"/>
    </location>
</feature>
<feature type="glycosylation site" description="N-linked (GlcNAc...) asparagine" evidence="6">
    <location>
        <position position="90"/>
    </location>
</feature>
<feature type="glycosylation site" description="N-linked (GlcNAc...) asparagine" evidence="6">
    <location>
        <position position="141"/>
    </location>
</feature>
<feature type="disulfide bond" evidence="1">
    <location>
        <begin position="133"/>
        <end position="149"/>
    </location>
</feature>
<feature type="non-terminal residue">
    <location>
        <position position="1"/>
    </location>
</feature>
<feature type="non-terminal residue">
    <location>
        <position position="177"/>
    </location>
</feature>
<proteinExistence type="evidence at transcript level"/>
<accession>O73707</accession>
<reference key="1">
    <citation type="journal article" date="1997" name="Proc. Natl. Acad. Sci. U.S.A.">
        <title>Predominance of the alpha1D subunit in L-type voltage-gated Ca2+ channels of hair cells in the chicken's cochlea.</title>
        <authorList>
            <person name="Kollmar R."/>
            <person name="Montgomery L.G."/>
            <person name="Fak J."/>
            <person name="Henry L.J."/>
            <person name="Hudspeth A.J."/>
        </authorList>
    </citation>
    <scope>NUCLEOTIDE SEQUENCE [MRNA]</scope>
    <source>
        <strain>White leghorn</strain>
        <tissue>Basilar papilla</tissue>
    </source>
</reference>
<dbReference type="EMBL" id="AF027610">
    <property type="protein sequence ID" value="AAC08311.1"/>
    <property type="molecule type" value="mRNA"/>
</dbReference>
<dbReference type="SMR" id="O73707"/>
<dbReference type="FunCoup" id="O73707">
    <property type="interactions" value="370"/>
</dbReference>
<dbReference type="STRING" id="9031.ENSGALP00000066917"/>
<dbReference type="GlyCosmos" id="O73707">
    <property type="glycosylation" value="2 sites, No reported glycans"/>
</dbReference>
<dbReference type="GlyGen" id="O73707">
    <property type="glycosylation" value="2 sites"/>
</dbReference>
<dbReference type="PaxDb" id="9031-ENSGALP00000021230"/>
<dbReference type="VEuPathDB" id="HostDB:geneid_395891"/>
<dbReference type="eggNOG" id="KOG2301">
    <property type="taxonomic scope" value="Eukaryota"/>
</dbReference>
<dbReference type="InParanoid" id="O73707"/>
<dbReference type="OrthoDB" id="431720at2759"/>
<dbReference type="PhylomeDB" id="O73707"/>
<dbReference type="Proteomes" id="UP000000539">
    <property type="component" value="Unassembled WGS sequence"/>
</dbReference>
<dbReference type="GO" id="GO:0030425">
    <property type="term" value="C:dendrite"/>
    <property type="evidence" value="ECO:0007669"/>
    <property type="project" value="UniProtKB-SubCell"/>
</dbReference>
<dbReference type="GO" id="GO:1990454">
    <property type="term" value="C:L-type voltage-gated calcium channel complex"/>
    <property type="evidence" value="ECO:0000250"/>
    <property type="project" value="UniProtKB"/>
</dbReference>
<dbReference type="GO" id="GO:0043204">
    <property type="term" value="C:perikaryon"/>
    <property type="evidence" value="ECO:0007669"/>
    <property type="project" value="UniProtKB-SubCell"/>
</dbReference>
<dbReference type="GO" id="GO:0005886">
    <property type="term" value="C:plasma membrane"/>
    <property type="evidence" value="ECO:0000250"/>
    <property type="project" value="UniProtKB"/>
</dbReference>
<dbReference type="GO" id="GO:0098839">
    <property type="term" value="C:postsynaptic density membrane"/>
    <property type="evidence" value="ECO:0007669"/>
    <property type="project" value="UniProtKB-SubCell"/>
</dbReference>
<dbReference type="GO" id="GO:0042383">
    <property type="term" value="C:sarcolemma"/>
    <property type="evidence" value="ECO:0000250"/>
    <property type="project" value="UniProtKB"/>
</dbReference>
<dbReference type="GO" id="GO:0030315">
    <property type="term" value="C:T-tubule"/>
    <property type="evidence" value="ECO:0000250"/>
    <property type="project" value="UniProtKB"/>
</dbReference>
<dbReference type="GO" id="GO:0005516">
    <property type="term" value="F:calmodulin binding"/>
    <property type="evidence" value="ECO:0007669"/>
    <property type="project" value="UniProtKB-KW"/>
</dbReference>
<dbReference type="GO" id="GO:0008331">
    <property type="term" value="F:high voltage-gated calcium channel activity"/>
    <property type="evidence" value="ECO:0000250"/>
    <property type="project" value="UniProtKB"/>
</dbReference>
<dbReference type="GO" id="GO:0005245">
    <property type="term" value="F:voltage-gated calcium channel activity"/>
    <property type="evidence" value="ECO:0000250"/>
    <property type="project" value="UniProtKB"/>
</dbReference>
<dbReference type="GO" id="GO:0070588">
    <property type="term" value="P:calcium ion transmembrane transport"/>
    <property type="evidence" value="ECO:0000250"/>
    <property type="project" value="UniProtKB"/>
</dbReference>
<dbReference type="GO" id="GO:0061577">
    <property type="term" value="P:calcium ion transmembrane transport via high voltage-gated calcium channel"/>
    <property type="evidence" value="ECO:0000250"/>
    <property type="project" value="UniProtKB"/>
</dbReference>
<dbReference type="GO" id="GO:0060402">
    <property type="term" value="P:calcium ion transport into cytosol"/>
    <property type="evidence" value="ECO:0000250"/>
    <property type="project" value="UniProtKB"/>
</dbReference>
<dbReference type="GO" id="GO:0061337">
    <property type="term" value="P:cardiac conduction"/>
    <property type="evidence" value="ECO:0000250"/>
    <property type="project" value="UniProtKB"/>
</dbReference>
<dbReference type="GO" id="GO:0010881">
    <property type="term" value="P:regulation of cardiac muscle contraction by regulation of the release of sequestered calcium ion"/>
    <property type="evidence" value="ECO:0000250"/>
    <property type="project" value="UniProtKB"/>
</dbReference>
<dbReference type="FunFam" id="1.10.287.70:FF:000187">
    <property type="entry name" value="Voltage-dependent L-type calcium channel subunit alpha"/>
    <property type="match status" value="1"/>
</dbReference>
<dbReference type="Gene3D" id="1.10.287.70">
    <property type="match status" value="1"/>
</dbReference>
<dbReference type="Gene3D" id="1.20.120.350">
    <property type="entry name" value="Voltage-gated potassium channels. Chain C"/>
    <property type="match status" value="1"/>
</dbReference>
<dbReference type="InterPro" id="IPR005821">
    <property type="entry name" value="Ion_trans_dom"/>
</dbReference>
<dbReference type="InterPro" id="IPR050599">
    <property type="entry name" value="VDCC_alpha-1_subunit"/>
</dbReference>
<dbReference type="InterPro" id="IPR002077">
    <property type="entry name" value="VDCCAlpha1"/>
</dbReference>
<dbReference type="InterPro" id="IPR027359">
    <property type="entry name" value="Volt_channel_dom_sf"/>
</dbReference>
<dbReference type="PANTHER" id="PTHR45628">
    <property type="entry name" value="VOLTAGE-DEPENDENT CALCIUM CHANNEL TYPE A SUBUNIT ALPHA-1"/>
    <property type="match status" value="1"/>
</dbReference>
<dbReference type="PANTHER" id="PTHR45628:SF10">
    <property type="entry name" value="VOLTAGE-DEPENDENT L-TYPE CALCIUM CHANNEL SUBUNIT ALPHA-1C"/>
    <property type="match status" value="1"/>
</dbReference>
<dbReference type="Pfam" id="PF00520">
    <property type="entry name" value="Ion_trans"/>
    <property type="match status" value="1"/>
</dbReference>
<dbReference type="PRINTS" id="PR00167">
    <property type="entry name" value="CACHANNEL"/>
</dbReference>
<dbReference type="SUPFAM" id="SSF81324">
    <property type="entry name" value="Voltage-gated potassium channels"/>
    <property type="match status" value="1"/>
</dbReference>
<sequence length="177" mass="19957">ALIVVGSIVDIAITEVNNAEENSRISITFFRLFRVMRLVKLLSRGEGIRTLLWTFIKSFQALPYVALLIVMLFFIYAVIGMQVFGKIALNDTTEINRNNNFQTFPQAVLLLFRCATGEAWQEIMLACLPDKKCDPDSEPANSTEADHSCGSSFAVFYFISFYMLCAFLIIDLFVAVI</sequence>
<keyword id="KW-0106">Calcium</keyword>
<keyword id="KW-0107">Calcium channel</keyword>
<keyword id="KW-0109">Calcium transport</keyword>
<keyword id="KW-0112">Calmodulin-binding</keyword>
<keyword id="KW-1003">Cell membrane</keyword>
<keyword id="KW-0966">Cell projection</keyword>
<keyword id="KW-1015">Disulfide bond</keyword>
<keyword id="KW-0325">Glycoprotein</keyword>
<keyword id="KW-0407">Ion channel</keyword>
<keyword id="KW-0406">Ion transport</keyword>
<keyword id="KW-0472">Membrane</keyword>
<keyword id="KW-0597">Phosphoprotein</keyword>
<keyword id="KW-0628">Postsynaptic cell membrane</keyword>
<keyword id="KW-1185">Reference proteome</keyword>
<keyword id="KW-0677">Repeat</keyword>
<keyword id="KW-0770">Synapse</keyword>
<keyword id="KW-0812">Transmembrane</keyword>
<keyword id="KW-1133">Transmembrane helix</keyword>
<keyword id="KW-0813">Transport</keyword>
<keyword id="KW-0851">Voltage-gated channel</keyword>
<organism>
    <name type="scientific">Gallus gallus</name>
    <name type="common">Chicken</name>
    <dbReference type="NCBI Taxonomy" id="9031"/>
    <lineage>
        <taxon>Eukaryota</taxon>
        <taxon>Metazoa</taxon>
        <taxon>Chordata</taxon>
        <taxon>Craniata</taxon>
        <taxon>Vertebrata</taxon>
        <taxon>Euteleostomi</taxon>
        <taxon>Archelosauria</taxon>
        <taxon>Archosauria</taxon>
        <taxon>Dinosauria</taxon>
        <taxon>Saurischia</taxon>
        <taxon>Theropoda</taxon>
        <taxon>Coelurosauria</taxon>
        <taxon>Aves</taxon>
        <taxon>Neognathae</taxon>
        <taxon>Galloanserae</taxon>
        <taxon>Galliformes</taxon>
        <taxon>Phasianidae</taxon>
        <taxon>Phasianinae</taxon>
        <taxon>Gallus</taxon>
    </lineage>
</organism>
<comment type="function">
    <text evidence="2 4 5">Pore-forming, alpha-1C subunit of the voltage-gated calcium channel that gives rise to L-type calcium currents. Mediates influx of calcium ions into the cytoplasm, and thereby triggers calcium release from the sarcoplasm. Plays an important role in excitation-contraction coupling in the heart. Required for normal heart development and normal regulation of heart rhythm (By similarity). Required for normal contraction of smooth muscle cells in blood vessels and in the intestine. Essential for normal blood pressure regulation via its role in the contraction of arterial smooth muscle cells (By similarity). Long-lasting (L-type) calcium channels belong to the 'high-voltage activated' (HVA) group (By similarity).</text>
</comment>
<comment type="catalytic activity">
    <reaction evidence="5">
        <text>Ca(2+)(in) = Ca(2+)(out)</text>
        <dbReference type="Rhea" id="RHEA:29671"/>
        <dbReference type="ChEBI" id="CHEBI:29108"/>
    </reaction>
</comment>
<comment type="activity regulation">
    <text evidence="5">Inhibited by dihydropyridines (DHP), such as isradipine. Channel activity is regulated by Ca(2+) and calmodulin.</text>
</comment>
<comment type="subunit">
    <text evidence="5">Component of a calcium channel complex consisting of a pore-forming alpha subunit (CACNA1C) and ancillary beta, gamma and delta subunits. The channel complex contains alpha, beta, gamma and delta subunits in a 1:1:1:1 ratio, i.e. it contains only one of each type of subunit. CACNA1C channel activity is modulated by ancillary subunits, such as CACNB2, CACNB3, CACNA2D1 and CACNA2D4.</text>
</comment>
<comment type="subcellular location">
    <subcellularLocation>
        <location evidence="3">Cell membrane</location>
        <topology evidence="3">Multi-pass membrane protein</topology>
    </subcellularLocation>
    <subcellularLocation>
        <location evidence="3">Perikaryon</location>
    </subcellularLocation>
    <subcellularLocation>
        <location evidence="3">Postsynaptic density membrane</location>
    </subcellularLocation>
    <subcellularLocation>
        <location evidence="3">Cell projection</location>
        <location evidence="3">Dendrite</location>
    </subcellularLocation>
    <subcellularLocation>
        <location evidence="4">Cell membrane</location>
        <location evidence="4">Sarcolemma</location>
        <location evidence="4">T-tubule</location>
    </subcellularLocation>
    <text evidence="2">The interaction between RRAD and CACNB2 promotes the expression of CACNA1C at the cell membrane.</text>
</comment>
<comment type="domain">
    <text>Each of the four internal repeats contains five hydrophobic transmembrane segments (S1, S2, S3, S5, S6) and one positively charged transmembrane segment (S4). S4 segments probably represent the voltage-sensor and are characterized by a series of positively charged amino acids at every third position.</text>
</comment>
<comment type="domain">
    <text evidence="2">Binding of intracellular calcium through the EF-hand motif inhibits the opening of the channel.</text>
</comment>
<comment type="PTM">
    <text evidence="2">Phosphorylation by PKA activates the channel.</text>
</comment>
<comment type="similarity">
    <text evidence="7">Belongs to the calcium channel alpha-1 subunit (TC 1.A.1.11) family. CACNA1C subfamily.</text>
</comment>